<dbReference type="EC" id="6.1.1.11" evidence="1"/>
<dbReference type="EMBL" id="AE009948">
    <property type="protein sequence ID" value="AAM99262.1"/>
    <property type="molecule type" value="Genomic_DNA"/>
</dbReference>
<dbReference type="RefSeq" id="NP_687390.1">
    <property type="nucleotide sequence ID" value="NC_004116.1"/>
</dbReference>
<dbReference type="RefSeq" id="WP_000886193.1">
    <property type="nucleotide sequence ID" value="NC_004116.1"/>
</dbReference>
<dbReference type="SMR" id="P67566"/>
<dbReference type="STRING" id="208435.SAG0356"/>
<dbReference type="KEGG" id="sag:SAG0356"/>
<dbReference type="PATRIC" id="fig|208435.3.peg.351"/>
<dbReference type="HOGENOM" id="CLU_023797_1_1_9"/>
<dbReference type="OrthoDB" id="9804647at2"/>
<dbReference type="UniPathway" id="UPA00906">
    <property type="reaction ID" value="UER00895"/>
</dbReference>
<dbReference type="Proteomes" id="UP000000821">
    <property type="component" value="Chromosome"/>
</dbReference>
<dbReference type="GO" id="GO:0005737">
    <property type="term" value="C:cytoplasm"/>
    <property type="evidence" value="ECO:0007669"/>
    <property type="project" value="UniProtKB-SubCell"/>
</dbReference>
<dbReference type="GO" id="GO:0005524">
    <property type="term" value="F:ATP binding"/>
    <property type="evidence" value="ECO:0007669"/>
    <property type="project" value="UniProtKB-UniRule"/>
</dbReference>
<dbReference type="GO" id="GO:0140096">
    <property type="term" value="F:catalytic activity, acting on a protein"/>
    <property type="evidence" value="ECO:0007669"/>
    <property type="project" value="UniProtKB-ARBA"/>
</dbReference>
<dbReference type="GO" id="GO:0004828">
    <property type="term" value="F:serine-tRNA ligase activity"/>
    <property type="evidence" value="ECO:0007669"/>
    <property type="project" value="UniProtKB-UniRule"/>
</dbReference>
<dbReference type="GO" id="GO:0016740">
    <property type="term" value="F:transferase activity"/>
    <property type="evidence" value="ECO:0007669"/>
    <property type="project" value="UniProtKB-ARBA"/>
</dbReference>
<dbReference type="GO" id="GO:0016260">
    <property type="term" value="P:selenocysteine biosynthetic process"/>
    <property type="evidence" value="ECO:0007669"/>
    <property type="project" value="UniProtKB-UniRule"/>
</dbReference>
<dbReference type="GO" id="GO:0006434">
    <property type="term" value="P:seryl-tRNA aminoacylation"/>
    <property type="evidence" value="ECO:0007669"/>
    <property type="project" value="UniProtKB-UniRule"/>
</dbReference>
<dbReference type="CDD" id="cd00770">
    <property type="entry name" value="SerRS_core"/>
    <property type="match status" value="1"/>
</dbReference>
<dbReference type="Gene3D" id="3.30.930.10">
    <property type="entry name" value="Bira Bifunctional Protein, Domain 2"/>
    <property type="match status" value="1"/>
</dbReference>
<dbReference type="Gene3D" id="1.10.287.40">
    <property type="entry name" value="Serine-tRNA synthetase, tRNA binding domain"/>
    <property type="match status" value="1"/>
</dbReference>
<dbReference type="HAMAP" id="MF_00176">
    <property type="entry name" value="Ser_tRNA_synth_type1"/>
    <property type="match status" value="1"/>
</dbReference>
<dbReference type="InterPro" id="IPR002314">
    <property type="entry name" value="aa-tRNA-synt_IIb"/>
</dbReference>
<dbReference type="InterPro" id="IPR006195">
    <property type="entry name" value="aa-tRNA-synth_II"/>
</dbReference>
<dbReference type="InterPro" id="IPR045864">
    <property type="entry name" value="aa-tRNA-synth_II/BPL/LPL"/>
</dbReference>
<dbReference type="InterPro" id="IPR002317">
    <property type="entry name" value="Ser-tRNA-ligase_type_1"/>
</dbReference>
<dbReference type="InterPro" id="IPR015866">
    <property type="entry name" value="Ser-tRNA-synth_1_N"/>
</dbReference>
<dbReference type="InterPro" id="IPR042103">
    <property type="entry name" value="SerRS_1_N_sf"/>
</dbReference>
<dbReference type="InterPro" id="IPR033729">
    <property type="entry name" value="SerRS_core"/>
</dbReference>
<dbReference type="InterPro" id="IPR010978">
    <property type="entry name" value="tRNA-bd_arm"/>
</dbReference>
<dbReference type="NCBIfam" id="TIGR00414">
    <property type="entry name" value="serS"/>
    <property type="match status" value="1"/>
</dbReference>
<dbReference type="PANTHER" id="PTHR43697:SF1">
    <property type="entry name" value="SERINE--TRNA LIGASE"/>
    <property type="match status" value="1"/>
</dbReference>
<dbReference type="PANTHER" id="PTHR43697">
    <property type="entry name" value="SERYL-TRNA SYNTHETASE"/>
    <property type="match status" value="1"/>
</dbReference>
<dbReference type="Pfam" id="PF02403">
    <property type="entry name" value="Seryl_tRNA_N"/>
    <property type="match status" value="1"/>
</dbReference>
<dbReference type="Pfam" id="PF00587">
    <property type="entry name" value="tRNA-synt_2b"/>
    <property type="match status" value="1"/>
</dbReference>
<dbReference type="PIRSF" id="PIRSF001529">
    <property type="entry name" value="Ser-tRNA-synth_IIa"/>
    <property type="match status" value="1"/>
</dbReference>
<dbReference type="PRINTS" id="PR00981">
    <property type="entry name" value="TRNASYNTHSER"/>
</dbReference>
<dbReference type="SUPFAM" id="SSF55681">
    <property type="entry name" value="Class II aaRS and biotin synthetases"/>
    <property type="match status" value="1"/>
</dbReference>
<dbReference type="SUPFAM" id="SSF46589">
    <property type="entry name" value="tRNA-binding arm"/>
    <property type="match status" value="1"/>
</dbReference>
<dbReference type="PROSITE" id="PS50862">
    <property type="entry name" value="AA_TRNA_LIGASE_II"/>
    <property type="match status" value="1"/>
</dbReference>
<accession>P67566</accession>
<accession>Q8E1J8</accession>
<accession>Q8E715</accession>
<organism>
    <name type="scientific">Streptococcus agalactiae serotype V (strain ATCC BAA-611 / 2603 V/R)</name>
    <dbReference type="NCBI Taxonomy" id="208435"/>
    <lineage>
        <taxon>Bacteria</taxon>
        <taxon>Bacillati</taxon>
        <taxon>Bacillota</taxon>
        <taxon>Bacilli</taxon>
        <taxon>Lactobacillales</taxon>
        <taxon>Streptococcaceae</taxon>
        <taxon>Streptococcus</taxon>
    </lineage>
</organism>
<gene>
    <name evidence="1" type="primary">serS</name>
    <name type="ordered locus">SAG0356</name>
</gene>
<comment type="function">
    <text evidence="1">Catalyzes the attachment of serine to tRNA(Ser). Is also able to aminoacylate tRNA(Sec) with serine, to form the misacylated tRNA L-seryl-tRNA(Sec), which will be further converted into selenocysteinyl-tRNA(Sec).</text>
</comment>
<comment type="catalytic activity">
    <reaction evidence="1">
        <text>tRNA(Ser) + L-serine + ATP = L-seryl-tRNA(Ser) + AMP + diphosphate + H(+)</text>
        <dbReference type="Rhea" id="RHEA:12292"/>
        <dbReference type="Rhea" id="RHEA-COMP:9669"/>
        <dbReference type="Rhea" id="RHEA-COMP:9703"/>
        <dbReference type="ChEBI" id="CHEBI:15378"/>
        <dbReference type="ChEBI" id="CHEBI:30616"/>
        <dbReference type="ChEBI" id="CHEBI:33019"/>
        <dbReference type="ChEBI" id="CHEBI:33384"/>
        <dbReference type="ChEBI" id="CHEBI:78442"/>
        <dbReference type="ChEBI" id="CHEBI:78533"/>
        <dbReference type="ChEBI" id="CHEBI:456215"/>
        <dbReference type="EC" id="6.1.1.11"/>
    </reaction>
</comment>
<comment type="catalytic activity">
    <reaction evidence="1">
        <text>tRNA(Sec) + L-serine + ATP = L-seryl-tRNA(Sec) + AMP + diphosphate + H(+)</text>
        <dbReference type="Rhea" id="RHEA:42580"/>
        <dbReference type="Rhea" id="RHEA-COMP:9742"/>
        <dbReference type="Rhea" id="RHEA-COMP:10128"/>
        <dbReference type="ChEBI" id="CHEBI:15378"/>
        <dbReference type="ChEBI" id="CHEBI:30616"/>
        <dbReference type="ChEBI" id="CHEBI:33019"/>
        <dbReference type="ChEBI" id="CHEBI:33384"/>
        <dbReference type="ChEBI" id="CHEBI:78442"/>
        <dbReference type="ChEBI" id="CHEBI:78533"/>
        <dbReference type="ChEBI" id="CHEBI:456215"/>
        <dbReference type="EC" id="6.1.1.11"/>
    </reaction>
</comment>
<comment type="pathway">
    <text evidence="1">Aminoacyl-tRNA biosynthesis; selenocysteinyl-tRNA(Sec) biosynthesis; L-seryl-tRNA(Sec) from L-serine and tRNA(Sec): step 1/1.</text>
</comment>
<comment type="subunit">
    <text evidence="1">Homodimer. The tRNA molecule binds across the dimer.</text>
</comment>
<comment type="subcellular location">
    <subcellularLocation>
        <location evidence="1">Cytoplasm</location>
    </subcellularLocation>
</comment>
<comment type="domain">
    <text evidence="1">Consists of two distinct domains, a catalytic core and a N-terminal extension that is involved in tRNA binding.</text>
</comment>
<comment type="similarity">
    <text evidence="1">Belongs to the class-II aminoacyl-tRNA synthetase family. Type-1 seryl-tRNA synthetase subfamily.</text>
</comment>
<proteinExistence type="inferred from homology"/>
<keyword id="KW-0030">Aminoacyl-tRNA synthetase</keyword>
<keyword id="KW-0067">ATP-binding</keyword>
<keyword id="KW-0963">Cytoplasm</keyword>
<keyword id="KW-0436">Ligase</keyword>
<keyword id="KW-0547">Nucleotide-binding</keyword>
<keyword id="KW-0648">Protein biosynthesis</keyword>
<keyword id="KW-1185">Reference proteome</keyword>
<name>SYS_STRA5</name>
<sequence length="425" mass="47960">MLDLKRIRTDFDVVAKKLATRGVDQETLTTLKELDIKRRELLIKAEEAKAQRNVASAAIAQAKRNKENADEQIAAMQTLSADIKAIDAELADVDANLQSMVTVLPNTPADDVPLGADEDENVEVRRWGTPREFDFETKAHWDLGESLGILDWERGAKVTGSRFLFYKGLGARLERAIYSFMLDEHAKEGYTEVIPPYMVNHDSMFGTGQYPKFKEDTFELADSPFVLIPTAEVPLTNYYRDEIIDGKELPIYFTAMSPSFRSEAGSAGRDTRGLIRLHQFHKVEMVKFAKPEESYQELEKMTANAENILQKLNLPYRVITLCTGDMGFSAAKTYDLEVWIPAQNTYREISSCSNTEDFQARRAQIRYRDEVDGKVRLLHTLNGSGLAVGRTVAAILENYQNEDGSVTIPEVLRPYMGNIDIIKPN</sequence>
<feature type="chain" id="PRO_0000122128" description="Serine--tRNA ligase">
    <location>
        <begin position="1"/>
        <end position="425"/>
    </location>
</feature>
<feature type="binding site" evidence="1">
    <location>
        <begin position="230"/>
        <end position="232"/>
    </location>
    <ligand>
        <name>L-serine</name>
        <dbReference type="ChEBI" id="CHEBI:33384"/>
    </ligand>
</feature>
<feature type="binding site" evidence="1">
    <location>
        <begin position="261"/>
        <end position="263"/>
    </location>
    <ligand>
        <name>ATP</name>
        <dbReference type="ChEBI" id="CHEBI:30616"/>
    </ligand>
</feature>
<feature type="binding site" evidence="1">
    <location>
        <position position="284"/>
    </location>
    <ligand>
        <name>L-serine</name>
        <dbReference type="ChEBI" id="CHEBI:33384"/>
    </ligand>
</feature>
<feature type="binding site" evidence="1">
    <location>
        <begin position="348"/>
        <end position="351"/>
    </location>
    <ligand>
        <name>ATP</name>
        <dbReference type="ChEBI" id="CHEBI:30616"/>
    </ligand>
</feature>
<feature type="binding site" evidence="1">
    <location>
        <position position="384"/>
    </location>
    <ligand>
        <name>L-serine</name>
        <dbReference type="ChEBI" id="CHEBI:33384"/>
    </ligand>
</feature>
<evidence type="ECO:0000255" key="1">
    <source>
        <dbReference type="HAMAP-Rule" id="MF_00176"/>
    </source>
</evidence>
<protein>
    <recommendedName>
        <fullName evidence="1">Serine--tRNA ligase</fullName>
        <ecNumber evidence="1">6.1.1.11</ecNumber>
    </recommendedName>
    <alternativeName>
        <fullName evidence="1">Seryl-tRNA synthetase</fullName>
        <shortName evidence="1">SerRS</shortName>
    </alternativeName>
    <alternativeName>
        <fullName evidence="1">Seryl-tRNA(Ser/Sec) synthetase</fullName>
    </alternativeName>
</protein>
<reference key="1">
    <citation type="journal article" date="2002" name="Proc. Natl. Acad. Sci. U.S.A.">
        <title>Complete genome sequence and comparative genomic analysis of an emerging human pathogen, serotype V Streptococcus agalactiae.</title>
        <authorList>
            <person name="Tettelin H."/>
            <person name="Masignani V."/>
            <person name="Cieslewicz M.J."/>
            <person name="Eisen J.A."/>
            <person name="Peterson S.N."/>
            <person name="Wessels M.R."/>
            <person name="Paulsen I.T."/>
            <person name="Nelson K.E."/>
            <person name="Margarit I."/>
            <person name="Read T.D."/>
            <person name="Madoff L.C."/>
            <person name="Wolf A.M."/>
            <person name="Beanan M.J."/>
            <person name="Brinkac L.M."/>
            <person name="Daugherty S.C."/>
            <person name="DeBoy R.T."/>
            <person name="Durkin A.S."/>
            <person name="Kolonay J.F."/>
            <person name="Madupu R."/>
            <person name="Lewis M.R."/>
            <person name="Radune D."/>
            <person name="Fedorova N.B."/>
            <person name="Scanlan D."/>
            <person name="Khouri H.M."/>
            <person name="Mulligan S."/>
            <person name="Carty H.A."/>
            <person name="Cline R.T."/>
            <person name="Van Aken S.E."/>
            <person name="Gill J."/>
            <person name="Scarselli M."/>
            <person name="Mora M."/>
            <person name="Iacobini E.T."/>
            <person name="Brettoni C."/>
            <person name="Galli G."/>
            <person name="Mariani M."/>
            <person name="Vegni F."/>
            <person name="Maione D."/>
            <person name="Rinaudo D."/>
            <person name="Rappuoli R."/>
            <person name="Telford J.L."/>
            <person name="Kasper D.L."/>
            <person name="Grandi G."/>
            <person name="Fraser C.M."/>
        </authorList>
    </citation>
    <scope>NUCLEOTIDE SEQUENCE [LARGE SCALE GENOMIC DNA]</scope>
    <source>
        <strain>ATCC BAA-611 / 2603 V/R</strain>
    </source>
</reference>